<dbReference type="EC" id="6.3.4.18" evidence="1"/>
<dbReference type="EMBL" id="U10241">
    <property type="protein sequence ID" value="AAA57003.1"/>
    <property type="status" value="ALT_FRAME"/>
    <property type="molecule type" value="Unassigned_DNA"/>
</dbReference>
<dbReference type="EMBL" id="AE008917">
    <property type="protein sequence ID" value="AAL51476.1"/>
    <property type="molecule type" value="Genomic_DNA"/>
</dbReference>
<dbReference type="PIR" id="AI3288">
    <property type="entry name" value="AI3288"/>
</dbReference>
<dbReference type="RefSeq" id="WP_004684185.1">
    <property type="nucleotide sequence ID" value="NC_003317.1"/>
</dbReference>
<dbReference type="SMR" id="P52559"/>
<dbReference type="GeneID" id="29593045"/>
<dbReference type="KEGG" id="bme:BMEI0295"/>
<dbReference type="KEGG" id="bmel:DK63_1138"/>
<dbReference type="PATRIC" id="fig|224914.52.peg.1202"/>
<dbReference type="eggNOG" id="COG0026">
    <property type="taxonomic scope" value="Bacteria"/>
</dbReference>
<dbReference type="PhylomeDB" id="P52559"/>
<dbReference type="UniPathway" id="UPA00074">
    <property type="reaction ID" value="UER00942"/>
</dbReference>
<dbReference type="Proteomes" id="UP000000419">
    <property type="component" value="Chromosome I"/>
</dbReference>
<dbReference type="GO" id="GO:0005829">
    <property type="term" value="C:cytosol"/>
    <property type="evidence" value="ECO:0007669"/>
    <property type="project" value="TreeGrafter"/>
</dbReference>
<dbReference type="GO" id="GO:0034028">
    <property type="term" value="F:5-(carboxyamino)imidazole ribonucleotide synthase activity"/>
    <property type="evidence" value="ECO:0007669"/>
    <property type="project" value="UniProtKB-UniRule"/>
</dbReference>
<dbReference type="GO" id="GO:0005524">
    <property type="term" value="F:ATP binding"/>
    <property type="evidence" value="ECO:0007669"/>
    <property type="project" value="UniProtKB-KW"/>
</dbReference>
<dbReference type="GO" id="GO:0046872">
    <property type="term" value="F:metal ion binding"/>
    <property type="evidence" value="ECO:0007669"/>
    <property type="project" value="InterPro"/>
</dbReference>
<dbReference type="GO" id="GO:0004638">
    <property type="term" value="F:phosphoribosylaminoimidazole carboxylase activity"/>
    <property type="evidence" value="ECO:0007669"/>
    <property type="project" value="InterPro"/>
</dbReference>
<dbReference type="GO" id="GO:0006189">
    <property type="term" value="P:'de novo' IMP biosynthetic process"/>
    <property type="evidence" value="ECO:0007669"/>
    <property type="project" value="UniProtKB-UniRule"/>
</dbReference>
<dbReference type="FunFam" id="3.40.50.20:FF:000016">
    <property type="entry name" value="N5-carboxyaminoimidazole ribonucleotide synthase"/>
    <property type="match status" value="1"/>
</dbReference>
<dbReference type="Gene3D" id="3.40.50.20">
    <property type="match status" value="1"/>
</dbReference>
<dbReference type="Gene3D" id="3.30.1490.20">
    <property type="entry name" value="ATP-grasp fold, A domain"/>
    <property type="match status" value="1"/>
</dbReference>
<dbReference type="Gene3D" id="3.30.470.20">
    <property type="entry name" value="ATP-grasp fold, B domain"/>
    <property type="match status" value="1"/>
</dbReference>
<dbReference type="HAMAP" id="MF_01928">
    <property type="entry name" value="PurK"/>
    <property type="match status" value="1"/>
</dbReference>
<dbReference type="InterPro" id="IPR011761">
    <property type="entry name" value="ATP-grasp"/>
</dbReference>
<dbReference type="InterPro" id="IPR003135">
    <property type="entry name" value="ATP-grasp_carboxylate-amine"/>
</dbReference>
<dbReference type="InterPro" id="IPR013815">
    <property type="entry name" value="ATP_grasp_subdomain_1"/>
</dbReference>
<dbReference type="InterPro" id="IPR016185">
    <property type="entry name" value="PreATP-grasp_dom_sf"/>
</dbReference>
<dbReference type="InterPro" id="IPR005875">
    <property type="entry name" value="PurK"/>
</dbReference>
<dbReference type="InterPro" id="IPR040686">
    <property type="entry name" value="PurK_C"/>
</dbReference>
<dbReference type="InterPro" id="IPR054350">
    <property type="entry name" value="PurT/PurK_preATP-grasp"/>
</dbReference>
<dbReference type="InterPro" id="IPR011054">
    <property type="entry name" value="Rudment_hybrid_motif"/>
</dbReference>
<dbReference type="NCBIfam" id="NF004675">
    <property type="entry name" value="PRK06019.1-1"/>
    <property type="match status" value="1"/>
</dbReference>
<dbReference type="NCBIfam" id="NF004676">
    <property type="entry name" value="PRK06019.1-2"/>
    <property type="match status" value="1"/>
</dbReference>
<dbReference type="NCBIfam" id="NF004679">
    <property type="entry name" value="PRK06019.1-5"/>
    <property type="match status" value="1"/>
</dbReference>
<dbReference type="NCBIfam" id="TIGR01161">
    <property type="entry name" value="purK"/>
    <property type="match status" value="1"/>
</dbReference>
<dbReference type="PANTHER" id="PTHR11609:SF5">
    <property type="entry name" value="PHOSPHORIBOSYLAMINOIMIDAZOLE CARBOXYLASE"/>
    <property type="match status" value="1"/>
</dbReference>
<dbReference type="PANTHER" id="PTHR11609">
    <property type="entry name" value="PURINE BIOSYNTHESIS PROTEIN 6/7, PUR6/7"/>
    <property type="match status" value="1"/>
</dbReference>
<dbReference type="Pfam" id="PF02222">
    <property type="entry name" value="ATP-grasp"/>
    <property type="match status" value="1"/>
</dbReference>
<dbReference type="Pfam" id="PF17769">
    <property type="entry name" value="PurK_C"/>
    <property type="match status" value="1"/>
</dbReference>
<dbReference type="Pfam" id="PF22660">
    <property type="entry name" value="RS_preATP-grasp-like"/>
    <property type="match status" value="1"/>
</dbReference>
<dbReference type="SUPFAM" id="SSF56059">
    <property type="entry name" value="Glutathione synthetase ATP-binding domain-like"/>
    <property type="match status" value="1"/>
</dbReference>
<dbReference type="SUPFAM" id="SSF52440">
    <property type="entry name" value="PreATP-grasp domain"/>
    <property type="match status" value="1"/>
</dbReference>
<dbReference type="SUPFAM" id="SSF51246">
    <property type="entry name" value="Rudiment single hybrid motif"/>
    <property type="match status" value="1"/>
</dbReference>
<dbReference type="PROSITE" id="PS50975">
    <property type="entry name" value="ATP_GRASP"/>
    <property type="match status" value="1"/>
</dbReference>
<keyword id="KW-0067">ATP-binding</keyword>
<keyword id="KW-0436">Ligase</keyword>
<keyword id="KW-0547">Nucleotide-binding</keyword>
<keyword id="KW-0658">Purine biosynthesis</keyword>
<feature type="chain" id="PRO_0000074995" description="N5-carboxyaminoimidazole ribonucleotide synthase">
    <location>
        <begin position="1"/>
        <end position="362"/>
    </location>
</feature>
<feature type="domain" description="ATP-grasp" evidence="1">
    <location>
        <begin position="112"/>
        <end position="300"/>
    </location>
</feature>
<feature type="binding site" evidence="1">
    <location>
        <position position="108"/>
    </location>
    <ligand>
        <name>ATP</name>
        <dbReference type="ChEBI" id="CHEBI:30616"/>
    </ligand>
</feature>
<feature type="binding site" evidence="1">
    <location>
        <position position="148"/>
    </location>
    <ligand>
        <name>ATP</name>
        <dbReference type="ChEBI" id="CHEBI:30616"/>
    </ligand>
</feature>
<feature type="binding site" evidence="1">
    <location>
        <begin position="153"/>
        <end position="159"/>
    </location>
    <ligand>
        <name>ATP</name>
        <dbReference type="ChEBI" id="CHEBI:30616"/>
    </ligand>
</feature>
<feature type="binding site" evidence="1">
    <location>
        <begin position="185"/>
        <end position="188"/>
    </location>
    <ligand>
        <name>ATP</name>
        <dbReference type="ChEBI" id="CHEBI:30616"/>
    </ligand>
</feature>
<feature type="binding site" evidence="1">
    <location>
        <position position="193"/>
    </location>
    <ligand>
        <name>ATP</name>
        <dbReference type="ChEBI" id="CHEBI:30616"/>
    </ligand>
</feature>
<feature type="binding site" evidence="1">
    <location>
        <position position="216"/>
    </location>
    <ligand>
        <name>ATP</name>
        <dbReference type="ChEBI" id="CHEBI:30616"/>
    </ligand>
</feature>
<feature type="binding site" evidence="1">
    <location>
        <begin position="270"/>
        <end position="271"/>
    </location>
    <ligand>
        <name>ATP</name>
        <dbReference type="ChEBI" id="CHEBI:30616"/>
    </ligand>
</feature>
<feature type="sequence conflict" description="In Ref. 1." evidence="2" ref="1">
    <original>Q</original>
    <variation>H</variation>
    <location>
        <position position="41"/>
    </location>
</feature>
<organism>
    <name type="scientific">Brucella melitensis biotype 1 (strain ATCC 23456 / CCUG 17765 / NCTC 10094 / 16M)</name>
    <dbReference type="NCBI Taxonomy" id="224914"/>
    <lineage>
        <taxon>Bacteria</taxon>
        <taxon>Pseudomonadati</taxon>
        <taxon>Pseudomonadota</taxon>
        <taxon>Alphaproteobacteria</taxon>
        <taxon>Hyphomicrobiales</taxon>
        <taxon>Brucellaceae</taxon>
        <taxon>Brucella/Ochrobactrum group</taxon>
        <taxon>Brucella</taxon>
    </lineage>
</organism>
<evidence type="ECO:0000255" key="1">
    <source>
        <dbReference type="HAMAP-Rule" id="MF_01928"/>
    </source>
</evidence>
<evidence type="ECO:0000305" key="2"/>
<sequence length="362" mass="38682">MDKTSLKPGSTIGIIGGGQLGRMLAMAAARFGYETIILEPQAGCPAAQVANRQIVAAYDDPKALAELAAASDVITYEFENVPVSAADKLAETALVLPPPAALEISQDRFTEKQFLNESGIETAPWRLVDDEETLIAALGALGGRGILKIRRLGYDGKGQVRLASLDETQACNAFAAINKAPAILEGFVEFEREVSVIAARDRSGNVAIFDLAENVHKDGILATSTVPAAISVQTAEAARTAAEKLLHALDYVGVLGLEFFVLKDGTLLANEFAPRVHNSGHWTEAACAISQFEQHIRAVAGLPLGNTDRHSDCVMENLIGDDIEKVPAILCEKNAVLHLYGKKEARAGRKIGHVTRIKPRTI</sequence>
<reference key="1">
    <citation type="submission" date="1994-12" db="EMBL/GenBank/DDBJ databases">
        <title>Molecular cloning and genetic characterization of the purEK operon of Brucella melitensis strain 16M.</title>
        <authorList>
            <person name="Warren R."/>
            <person name="Hoover D."/>
            <person name="Hadfield T."/>
            <person name="Drazek S."/>
        </authorList>
    </citation>
    <scope>NUCLEOTIDE SEQUENCE [GENOMIC DNA]</scope>
    <source>
        <strain>ATCC 23456 / CCUG 17765 / NCTC 10094 / 16M</strain>
    </source>
</reference>
<reference key="2">
    <citation type="journal article" date="2002" name="Proc. Natl. Acad. Sci. U.S.A.">
        <title>The genome sequence of the facultative intracellular pathogen Brucella melitensis.</title>
        <authorList>
            <person name="DelVecchio V.G."/>
            <person name="Kapatral V."/>
            <person name="Redkar R.J."/>
            <person name="Patra G."/>
            <person name="Mujer C."/>
            <person name="Los T."/>
            <person name="Ivanova N."/>
            <person name="Anderson I."/>
            <person name="Bhattacharyya A."/>
            <person name="Lykidis A."/>
            <person name="Reznik G."/>
            <person name="Jablonski L."/>
            <person name="Larsen N."/>
            <person name="D'Souza M."/>
            <person name="Bernal A."/>
            <person name="Mazur M."/>
            <person name="Goltsman E."/>
            <person name="Selkov E."/>
            <person name="Elzer P.H."/>
            <person name="Hagius S."/>
            <person name="O'Callaghan D."/>
            <person name="Letesson J.-J."/>
            <person name="Haselkorn R."/>
            <person name="Kyrpides N.C."/>
            <person name="Overbeek R."/>
        </authorList>
    </citation>
    <scope>NUCLEOTIDE SEQUENCE [LARGE SCALE GENOMIC DNA]</scope>
    <source>
        <strain>ATCC 23456 / CCUG 17765 / NCTC 10094 / 16M</strain>
    </source>
</reference>
<proteinExistence type="inferred from homology"/>
<gene>
    <name evidence="1" type="primary">purK</name>
    <name type="ordered locus">BMEI0295</name>
</gene>
<protein>
    <recommendedName>
        <fullName evidence="1">N5-carboxyaminoimidazole ribonucleotide synthase</fullName>
        <shortName evidence="1">N5-CAIR synthase</shortName>
        <ecNumber evidence="1">6.3.4.18</ecNumber>
    </recommendedName>
    <alternativeName>
        <fullName evidence="1">5-(carboxyamino)imidazole ribonucleotide synthetase</fullName>
    </alternativeName>
</protein>
<comment type="function">
    <text evidence="1">Catalyzes the ATP-dependent conversion of 5-aminoimidazole ribonucleotide (AIR) and HCO(3)(-) to N5-carboxyaminoimidazole ribonucleotide (N5-CAIR).</text>
</comment>
<comment type="catalytic activity">
    <reaction evidence="1">
        <text>5-amino-1-(5-phospho-beta-D-ribosyl)imidazole + hydrogencarbonate + ATP = 5-carboxyamino-1-(5-phospho-D-ribosyl)imidazole + ADP + phosphate + 2 H(+)</text>
        <dbReference type="Rhea" id="RHEA:19317"/>
        <dbReference type="ChEBI" id="CHEBI:15378"/>
        <dbReference type="ChEBI" id="CHEBI:17544"/>
        <dbReference type="ChEBI" id="CHEBI:30616"/>
        <dbReference type="ChEBI" id="CHEBI:43474"/>
        <dbReference type="ChEBI" id="CHEBI:58730"/>
        <dbReference type="ChEBI" id="CHEBI:137981"/>
        <dbReference type="ChEBI" id="CHEBI:456216"/>
        <dbReference type="EC" id="6.3.4.18"/>
    </reaction>
</comment>
<comment type="pathway">
    <text evidence="1">Purine metabolism; IMP biosynthesis via de novo pathway; 5-amino-1-(5-phospho-D-ribosyl)imidazole-4-carboxylate from 5-amino-1-(5-phospho-D-ribosyl)imidazole (N5-CAIR route): step 1/2.</text>
</comment>
<comment type="subunit">
    <text evidence="1">Homodimer.</text>
</comment>
<comment type="similarity">
    <text evidence="1">Belongs to the PurK/PurT family.</text>
</comment>
<comment type="sequence caution" evidence="2">
    <conflict type="frameshift">
        <sequence resource="EMBL-CDS" id="AAA57003"/>
    </conflict>
</comment>
<name>PURK_BRUME</name>
<accession>P52559</accession>